<keyword id="KW-0150">Chloroplast</keyword>
<keyword id="KW-0903">Direct protein sequencing</keyword>
<keyword id="KW-0507">mRNA processing</keyword>
<keyword id="KW-0934">Plastid</keyword>
<keyword id="KW-1185">Reference proteome</keyword>
<keyword id="KW-0677">Repeat</keyword>
<keyword id="KW-0687">Ribonucleoprotein</keyword>
<keyword id="KW-0694">RNA-binding</keyword>
<keyword id="KW-0809">Transit peptide</keyword>
<reference key="1">
    <citation type="journal article" date="1990" name="EMBO J.">
        <title>Three distinct ribonucleoproteins from tobacco chloroplasts: each contains a unique amino terminal acidic domain and two ribonucleoprotein consensus motifs.</title>
        <authorList>
            <person name="Li Y."/>
            <person name="Sugiura M."/>
        </authorList>
    </citation>
    <scope>NUCLEOTIDE SEQUENCE [MRNA]</scope>
    <scope>PROTEIN SEQUENCE OF 72-83</scope>
    <source>
        <strain>cv. Bright Yellow 4</strain>
    </source>
</reference>
<accession>P19684</accession>
<proteinExistence type="evidence at protein level"/>
<dbReference type="EMBL" id="X53932">
    <property type="protein sequence ID" value="CAA37879.1"/>
    <property type="molecule type" value="mRNA"/>
</dbReference>
<dbReference type="SMR" id="P19684"/>
<dbReference type="STRING" id="4096.P19684"/>
<dbReference type="KEGG" id="nta:107767634"/>
<dbReference type="eggNOG" id="KOG0118">
    <property type="taxonomic scope" value="Eukaryota"/>
</dbReference>
<dbReference type="Proteomes" id="UP000189701">
    <property type="component" value="Unplaced"/>
</dbReference>
<dbReference type="GO" id="GO:0009535">
    <property type="term" value="C:chloroplast thylakoid membrane"/>
    <property type="evidence" value="ECO:0007669"/>
    <property type="project" value="TreeGrafter"/>
</dbReference>
<dbReference type="GO" id="GO:1990904">
    <property type="term" value="C:ribonucleoprotein complex"/>
    <property type="evidence" value="ECO:0007669"/>
    <property type="project" value="UniProtKB-KW"/>
</dbReference>
<dbReference type="GO" id="GO:0003729">
    <property type="term" value="F:mRNA binding"/>
    <property type="evidence" value="ECO:0007669"/>
    <property type="project" value="TreeGrafter"/>
</dbReference>
<dbReference type="GO" id="GO:1901259">
    <property type="term" value="P:chloroplast rRNA processing"/>
    <property type="evidence" value="ECO:0007669"/>
    <property type="project" value="TreeGrafter"/>
</dbReference>
<dbReference type="GO" id="GO:0006397">
    <property type="term" value="P:mRNA processing"/>
    <property type="evidence" value="ECO:0007669"/>
    <property type="project" value="UniProtKB-KW"/>
</dbReference>
<dbReference type="CDD" id="cd21609">
    <property type="entry name" value="RRM1_PSRP2_like"/>
    <property type="match status" value="1"/>
</dbReference>
<dbReference type="CDD" id="cd21608">
    <property type="entry name" value="RRM2_NsCP33_like"/>
    <property type="match status" value="1"/>
</dbReference>
<dbReference type="Gene3D" id="3.30.70.330">
    <property type="match status" value="2"/>
</dbReference>
<dbReference type="InterPro" id="IPR050502">
    <property type="entry name" value="Euk_RNA-bind_prot"/>
</dbReference>
<dbReference type="InterPro" id="IPR012677">
    <property type="entry name" value="Nucleotide-bd_a/b_plait_sf"/>
</dbReference>
<dbReference type="InterPro" id="IPR035979">
    <property type="entry name" value="RBD_domain_sf"/>
</dbReference>
<dbReference type="InterPro" id="IPR048289">
    <property type="entry name" value="RRM2_NsCP33-like"/>
</dbReference>
<dbReference type="InterPro" id="IPR000504">
    <property type="entry name" value="RRM_dom"/>
</dbReference>
<dbReference type="PANTHER" id="PTHR48025">
    <property type="entry name" value="OS02G0815200 PROTEIN"/>
    <property type="match status" value="1"/>
</dbReference>
<dbReference type="PANTHER" id="PTHR48025:SF11">
    <property type="entry name" value="RNA-BINDING PROTEIN CP33, CHLOROPLASTIC"/>
    <property type="match status" value="1"/>
</dbReference>
<dbReference type="Pfam" id="PF00076">
    <property type="entry name" value="RRM_1"/>
    <property type="match status" value="2"/>
</dbReference>
<dbReference type="SMART" id="SM00360">
    <property type="entry name" value="RRM"/>
    <property type="match status" value="2"/>
</dbReference>
<dbReference type="SUPFAM" id="SSF54928">
    <property type="entry name" value="RNA-binding domain, RBD"/>
    <property type="match status" value="2"/>
</dbReference>
<dbReference type="PROSITE" id="PS50102">
    <property type="entry name" value="RRM"/>
    <property type="match status" value="2"/>
</dbReference>
<name>ROC5_NICSY</name>
<feature type="transit peptide" description="Chloroplast" evidence="3">
    <location>
        <begin position="1"/>
        <end position="71"/>
    </location>
</feature>
<feature type="chain" id="PRO_0000031030" description="33 kDa ribonucleoprotein, chloroplastic">
    <location>
        <begin position="72"/>
        <end position="324"/>
    </location>
</feature>
<feature type="domain" description="RRM 1" evidence="1">
    <location>
        <begin position="114"/>
        <end position="192"/>
    </location>
</feature>
<feature type="domain" description="RRM 2" evidence="1">
    <location>
        <begin position="217"/>
        <end position="296"/>
    </location>
</feature>
<feature type="region of interest" description="Disordered" evidence="2">
    <location>
        <begin position="294"/>
        <end position="324"/>
    </location>
</feature>
<feature type="compositionally biased region" description="Low complexity" evidence="2">
    <location>
        <begin position="298"/>
        <end position="308"/>
    </location>
</feature>
<comment type="function">
    <text>Could be involved in splicing and/or processing of chloroplast RNA's.</text>
</comment>
<comment type="subcellular location">
    <subcellularLocation>
        <location>Plastid</location>
        <location>Chloroplast</location>
    </subcellularLocation>
</comment>
<organism>
    <name type="scientific">Nicotiana sylvestris</name>
    <name type="common">Wood tobacco</name>
    <name type="synonym">South American tobacco</name>
    <dbReference type="NCBI Taxonomy" id="4096"/>
    <lineage>
        <taxon>Eukaryota</taxon>
        <taxon>Viridiplantae</taxon>
        <taxon>Streptophyta</taxon>
        <taxon>Embryophyta</taxon>
        <taxon>Tracheophyta</taxon>
        <taxon>Spermatophyta</taxon>
        <taxon>Magnoliopsida</taxon>
        <taxon>eudicotyledons</taxon>
        <taxon>Gunneridae</taxon>
        <taxon>Pentapetalae</taxon>
        <taxon>asterids</taxon>
        <taxon>lamiids</taxon>
        <taxon>Solanales</taxon>
        <taxon>Solanaceae</taxon>
        <taxon>Nicotianoideae</taxon>
        <taxon>Nicotianeae</taxon>
        <taxon>Nicotiana</taxon>
    </lineage>
</organism>
<sequence>MSGCCFSFAATASTSSTSLLYLFTQKPKFSVDHLSLSTYNTHFNFKINSTKLKAHFPISSLYRSSIFLSTCASVSDGVEVVQEDDEEEVALSAEEEEEIEEKEERVESESVEGGRLYVGNLPFSMTSSQLSEIFAEAGTVANVEIVYDRVTDRSRGFAFVTMGSVEEAKEAIRLFDGSQVGGRTVKVNFPEVPRGGEREVMSAKIRSTYQGFVDSPHKLYVANLSWALTSQGLRDAFADQPGFMSAKVIYDRSSGRSRGFGFITFSSAEAMNSALDTMNEVELEGRPLRLNVAGQKAPVSSPPVVETSPENDSDNSELLSSLSS</sequence>
<evidence type="ECO:0000255" key="1">
    <source>
        <dbReference type="PROSITE-ProRule" id="PRU00176"/>
    </source>
</evidence>
<evidence type="ECO:0000256" key="2">
    <source>
        <dbReference type="SAM" id="MobiDB-lite"/>
    </source>
</evidence>
<evidence type="ECO:0000269" key="3">
    <source>
    </source>
</evidence>
<protein>
    <recommendedName>
        <fullName>33 kDa ribonucleoprotein, chloroplastic</fullName>
    </recommendedName>
</protein>